<keyword id="KW-0067">ATP-binding</keyword>
<keyword id="KW-0963">Cytoplasm</keyword>
<keyword id="KW-0227">DNA damage</keyword>
<keyword id="KW-0234">DNA repair</keyword>
<keyword id="KW-0235">DNA replication</keyword>
<keyword id="KW-0238">DNA-binding</keyword>
<keyword id="KW-0547">Nucleotide-binding</keyword>
<keyword id="KW-0742">SOS response</keyword>
<feature type="chain" id="PRO_0000196483" description="DNA replication and repair protein RecF">
    <location>
        <begin position="1"/>
        <end position="363"/>
    </location>
</feature>
<feature type="binding site" evidence="1">
    <location>
        <begin position="33"/>
        <end position="40"/>
    </location>
    <ligand>
        <name>ATP</name>
        <dbReference type="ChEBI" id="CHEBI:30616"/>
    </ligand>
</feature>
<name>RECF_TROW8</name>
<reference key="1">
    <citation type="journal article" date="2003" name="Lancet">
        <title>Sequencing and analysis of the genome of the Whipple's disease bacterium Tropheryma whipplei.</title>
        <authorList>
            <person name="Bentley S.D."/>
            <person name="Maiwald M."/>
            <person name="Murphy L.D."/>
            <person name="Pallen M.J."/>
            <person name="Yeats C.A."/>
            <person name="Dover L.G."/>
            <person name="Norbertczak H.T."/>
            <person name="Besra G.S."/>
            <person name="Quail M.A."/>
            <person name="Harris D.E."/>
            <person name="von Herbay A."/>
            <person name="Goble A."/>
            <person name="Rutter S."/>
            <person name="Squares R."/>
            <person name="Squares S."/>
            <person name="Barrell B.G."/>
            <person name="Parkhill J."/>
            <person name="Relman D.A."/>
        </authorList>
    </citation>
    <scope>NUCLEOTIDE SEQUENCE [LARGE SCALE GENOMIC DNA]</scope>
    <source>
        <strain>TW08/27</strain>
    </source>
</reference>
<dbReference type="EMBL" id="BX251410">
    <property type="protein sequence ID" value="CAD66695.1"/>
    <property type="molecule type" value="Genomic_DNA"/>
</dbReference>
<dbReference type="RefSeq" id="WP_011095976.1">
    <property type="nucleotide sequence ID" value="NC_004551.1"/>
</dbReference>
<dbReference type="SMR" id="Q83NZ4"/>
<dbReference type="GeneID" id="67387781"/>
<dbReference type="KEGG" id="tws:TW003"/>
<dbReference type="HOGENOM" id="CLU_040267_1_1_11"/>
<dbReference type="GO" id="GO:0005737">
    <property type="term" value="C:cytoplasm"/>
    <property type="evidence" value="ECO:0007669"/>
    <property type="project" value="UniProtKB-SubCell"/>
</dbReference>
<dbReference type="GO" id="GO:0005524">
    <property type="term" value="F:ATP binding"/>
    <property type="evidence" value="ECO:0007669"/>
    <property type="project" value="UniProtKB-UniRule"/>
</dbReference>
<dbReference type="GO" id="GO:0003697">
    <property type="term" value="F:single-stranded DNA binding"/>
    <property type="evidence" value="ECO:0007669"/>
    <property type="project" value="UniProtKB-UniRule"/>
</dbReference>
<dbReference type="GO" id="GO:0006260">
    <property type="term" value="P:DNA replication"/>
    <property type="evidence" value="ECO:0007669"/>
    <property type="project" value="UniProtKB-UniRule"/>
</dbReference>
<dbReference type="GO" id="GO:0000731">
    <property type="term" value="P:DNA synthesis involved in DNA repair"/>
    <property type="evidence" value="ECO:0007669"/>
    <property type="project" value="TreeGrafter"/>
</dbReference>
<dbReference type="GO" id="GO:0006302">
    <property type="term" value="P:double-strand break repair"/>
    <property type="evidence" value="ECO:0007669"/>
    <property type="project" value="TreeGrafter"/>
</dbReference>
<dbReference type="GO" id="GO:0009432">
    <property type="term" value="P:SOS response"/>
    <property type="evidence" value="ECO:0007669"/>
    <property type="project" value="UniProtKB-UniRule"/>
</dbReference>
<dbReference type="Gene3D" id="3.40.50.300">
    <property type="entry name" value="P-loop containing nucleotide triphosphate hydrolases"/>
    <property type="match status" value="1"/>
</dbReference>
<dbReference type="Gene3D" id="1.20.1050.90">
    <property type="entry name" value="RecF/RecN/SMC, N-terminal domain"/>
    <property type="match status" value="1"/>
</dbReference>
<dbReference type="HAMAP" id="MF_00365">
    <property type="entry name" value="RecF"/>
    <property type="match status" value="1"/>
</dbReference>
<dbReference type="InterPro" id="IPR001238">
    <property type="entry name" value="DNA-binding_RecF"/>
</dbReference>
<dbReference type="InterPro" id="IPR018078">
    <property type="entry name" value="DNA-binding_RecF_CS"/>
</dbReference>
<dbReference type="InterPro" id="IPR027417">
    <property type="entry name" value="P-loop_NTPase"/>
</dbReference>
<dbReference type="InterPro" id="IPR003395">
    <property type="entry name" value="RecF/RecN/SMC_N"/>
</dbReference>
<dbReference type="InterPro" id="IPR042174">
    <property type="entry name" value="RecF_2"/>
</dbReference>
<dbReference type="NCBIfam" id="TIGR00611">
    <property type="entry name" value="recf"/>
    <property type="match status" value="1"/>
</dbReference>
<dbReference type="PANTHER" id="PTHR32182">
    <property type="entry name" value="DNA REPLICATION AND REPAIR PROTEIN RECF"/>
    <property type="match status" value="1"/>
</dbReference>
<dbReference type="PANTHER" id="PTHR32182:SF0">
    <property type="entry name" value="DNA REPLICATION AND REPAIR PROTEIN RECF"/>
    <property type="match status" value="1"/>
</dbReference>
<dbReference type="Pfam" id="PF02463">
    <property type="entry name" value="SMC_N"/>
    <property type="match status" value="1"/>
</dbReference>
<dbReference type="SUPFAM" id="SSF52540">
    <property type="entry name" value="P-loop containing nucleoside triphosphate hydrolases"/>
    <property type="match status" value="1"/>
</dbReference>
<dbReference type="PROSITE" id="PS00617">
    <property type="entry name" value="RECF_1"/>
    <property type="match status" value="1"/>
</dbReference>
<dbReference type="PROSITE" id="PS00618">
    <property type="entry name" value="RECF_2"/>
    <property type="match status" value="1"/>
</dbReference>
<evidence type="ECO:0000255" key="1">
    <source>
        <dbReference type="HAMAP-Rule" id="MF_00365"/>
    </source>
</evidence>
<proteinExistence type="inferred from homology"/>
<organism>
    <name type="scientific">Tropheryma whipplei (strain TW08/27)</name>
    <name type="common">Whipple's bacillus</name>
    <dbReference type="NCBI Taxonomy" id="218496"/>
    <lineage>
        <taxon>Bacteria</taxon>
        <taxon>Bacillati</taxon>
        <taxon>Actinomycetota</taxon>
        <taxon>Actinomycetes</taxon>
        <taxon>Micrococcales</taxon>
        <taxon>Tropherymataceae</taxon>
        <taxon>Tropheryma</taxon>
    </lineage>
</organism>
<comment type="function">
    <text evidence="1">The RecF protein is involved in DNA metabolism; it is required for DNA replication and normal SOS inducibility. RecF binds preferentially to single-stranded, linear DNA. It also seems to bind ATP.</text>
</comment>
<comment type="subcellular location">
    <subcellularLocation>
        <location evidence="1">Cytoplasm</location>
    </subcellularLocation>
</comment>
<comment type="similarity">
    <text evidence="1">Belongs to the RecF family.</text>
</comment>
<gene>
    <name evidence="1" type="primary">recF</name>
    <name type="ordered locus">TW003</name>
</gene>
<protein>
    <recommendedName>
        <fullName evidence="1">DNA replication and repair protein RecF</fullName>
    </recommendedName>
</protein>
<sequence length="363" mass="41254">MQNNLISHINLRNFRNYEYQSISFTDGLNLIRGDNGQGKTNLAEAIYFLSGFGSHRTYKNQPLIKSGEQKAEISAKIQSKYGTRNVYIGISCNSNNILKVDGKPSKLRDLVSVFSCVIFSPEDIDLVKGDPGHRRKYLDDIICRARPMMLDIYSAYDRTLKQRNSLLKSFRKSSCKSDLLDIWTQKLVELGLEIVNARKRLLKILNPKISEFYSKLAGVSSTAELFCQSSDCLIDTFDLLRDREIEEGVTLAGPHRDNVDILLNSCPARSQSSQGESWTLALSMKLSLIELMRETKRLYDPDPVVILDDVFAHLDSYRKQKLAQEVFSYEQTIVTTTDNSDNYRTSQTLVVEEGKVFSENKKG</sequence>
<accession>Q83NZ4</accession>